<sequence>MHYLNISFTYKNTDISVREKLAFDSDEKKDQILRLLKSSKNIIECMVLSTCNRVEVLAYTNDIKSAMTHIIRCLTVYSGVFEDELFERADIYEDSGAVHHLFAVASSLDSLVVGETQIVGQLKNAFKFAFDNASSGEHISRLVHYACKCAARVRNETQISKNPISVSSVAVAKAKEIFGTLENKTAVVIGAGEMGELAAKHLITSGANVIIINRSSDHVEELVENLGDKASWDSILKLKEYINKYDLIFSSTSAPHAIITGELIEPQEFRRYFFDIAVPRDIDLVNTDKISVYSVDSLEEMVRRNLALREEQAQTAYSIVGQSTNEFLKFLKDNISIPLIKTIRKKAEICAEAELEKALKKGYLKHSDKEEAAKLIHQVFKAFLHSPTINLKSLASKNDAEQIAGGIKFLFDIKEENLENLTKDIDEI</sequence>
<organism>
    <name type="scientific">Campylobacter curvus (strain 525.92)</name>
    <dbReference type="NCBI Taxonomy" id="360105"/>
    <lineage>
        <taxon>Bacteria</taxon>
        <taxon>Pseudomonadati</taxon>
        <taxon>Campylobacterota</taxon>
        <taxon>Epsilonproteobacteria</taxon>
        <taxon>Campylobacterales</taxon>
        <taxon>Campylobacteraceae</taxon>
        <taxon>Campylobacter</taxon>
    </lineage>
</organism>
<gene>
    <name evidence="1" type="primary">hemA</name>
    <name type="ordered locus">Ccur92_10850</name>
    <name type="ORF">CCV52592_0764</name>
</gene>
<protein>
    <recommendedName>
        <fullName evidence="1">Glutamyl-tRNA reductase</fullName>
        <shortName evidence="1">GluTR</shortName>
        <ecNumber evidence="1">1.2.1.70</ecNumber>
    </recommendedName>
</protein>
<name>HEM1_CAMC5</name>
<accession>A7GYU7</accession>
<reference key="1">
    <citation type="submission" date="2007-07" db="EMBL/GenBank/DDBJ databases">
        <title>Genome sequence of Campylobacter curvus 525.92 isolated from human feces.</title>
        <authorList>
            <person name="Fouts D.E."/>
            <person name="Mongodin E.F."/>
            <person name="Puiu D."/>
            <person name="Sebastian Y."/>
            <person name="Miller W.G."/>
            <person name="Mandrell R.E."/>
            <person name="Lastovica A.J."/>
            <person name="Nelson K.E."/>
        </authorList>
    </citation>
    <scope>NUCLEOTIDE SEQUENCE [LARGE SCALE GENOMIC DNA]</scope>
    <source>
        <strain>525.92</strain>
    </source>
</reference>
<comment type="function">
    <text evidence="1">Catalyzes the NADPH-dependent reduction of glutamyl-tRNA(Glu) to glutamate 1-semialdehyde (GSA).</text>
</comment>
<comment type="catalytic activity">
    <reaction evidence="1">
        <text>(S)-4-amino-5-oxopentanoate + tRNA(Glu) + NADP(+) = L-glutamyl-tRNA(Glu) + NADPH + H(+)</text>
        <dbReference type="Rhea" id="RHEA:12344"/>
        <dbReference type="Rhea" id="RHEA-COMP:9663"/>
        <dbReference type="Rhea" id="RHEA-COMP:9680"/>
        <dbReference type="ChEBI" id="CHEBI:15378"/>
        <dbReference type="ChEBI" id="CHEBI:57501"/>
        <dbReference type="ChEBI" id="CHEBI:57783"/>
        <dbReference type="ChEBI" id="CHEBI:58349"/>
        <dbReference type="ChEBI" id="CHEBI:78442"/>
        <dbReference type="ChEBI" id="CHEBI:78520"/>
        <dbReference type="EC" id="1.2.1.70"/>
    </reaction>
</comment>
<comment type="pathway">
    <text evidence="1">Porphyrin-containing compound metabolism; protoporphyrin-IX biosynthesis; 5-aminolevulinate from L-glutamyl-tRNA(Glu): step 1/2.</text>
</comment>
<comment type="subunit">
    <text evidence="1">Homodimer.</text>
</comment>
<comment type="domain">
    <text evidence="1">Possesses an unusual extended V-shaped dimeric structure with each monomer consisting of three distinct domains arranged along a curved 'spinal' alpha-helix. The N-terminal catalytic domain specifically recognizes the glutamate moiety of the substrate. The second domain is the NADPH-binding domain, and the third C-terminal domain is responsible for dimerization.</text>
</comment>
<comment type="miscellaneous">
    <text evidence="1">During catalysis, the active site Cys acts as a nucleophile attacking the alpha-carbonyl group of tRNA-bound glutamate with the formation of a thioester intermediate between enzyme and glutamate, and the concomitant release of tRNA(Glu). The thioester intermediate is finally reduced by direct hydride transfer from NADPH, to form the product GSA.</text>
</comment>
<comment type="similarity">
    <text evidence="1">Belongs to the glutamyl-tRNA reductase family.</text>
</comment>
<dbReference type="EC" id="1.2.1.70" evidence="1"/>
<dbReference type="EMBL" id="CP000767">
    <property type="protein sequence ID" value="EAT99944.1"/>
    <property type="molecule type" value="Genomic_DNA"/>
</dbReference>
<dbReference type="RefSeq" id="WP_009651284.1">
    <property type="nucleotide sequence ID" value="NC_009715.2"/>
</dbReference>
<dbReference type="SMR" id="A7GYU7"/>
<dbReference type="STRING" id="360105.CCV52592_0764"/>
<dbReference type="KEGG" id="ccv:CCV52592_0764"/>
<dbReference type="HOGENOM" id="CLU_035113_2_2_7"/>
<dbReference type="OrthoDB" id="110209at2"/>
<dbReference type="UniPathway" id="UPA00251">
    <property type="reaction ID" value="UER00316"/>
</dbReference>
<dbReference type="Proteomes" id="UP000006380">
    <property type="component" value="Chromosome"/>
</dbReference>
<dbReference type="GO" id="GO:0008883">
    <property type="term" value="F:glutamyl-tRNA reductase activity"/>
    <property type="evidence" value="ECO:0007669"/>
    <property type="project" value="UniProtKB-UniRule"/>
</dbReference>
<dbReference type="GO" id="GO:0050661">
    <property type="term" value="F:NADP binding"/>
    <property type="evidence" value="ECO:0007669"/>
    <property type="project" value="InterPro"/>
</dbReference>
<dbReference type="GO" id="GO:0019353">
    <property type="term" value="P:protoporphyrinogen IX biosynthetic process from glutamate"/>
    <property type="evidence" value="ECO:0007669"/>
    <property type="project" value="TreeGrafter"/>
</dbReference>
<dbReference type="CDD" id="cd05213">
    <property type="entry name" value="NAD_bind_Glutamyl_tRNA_reduct"/>
    <property type="match status" value="1"/>
</dbReference>
<dbReference type="FunFam" id="3.30.460.30:FF:000001">
    <property type="entry name" value="Glutamyl-tRNA reductase"/>
    <property type="match status" value="1"/>
</dbReference>
<dbReference type="Gene3D" id="3.30.460.30">
    <property type="entry name" value="Glutamyl-tRNA reductase, N-terminal domain"/>
    <property type="match status" value="1"/>
</dbReference>
<dbReference type="Gene3D" id="3.40.50.720">
    <property type="entry name" value="NAD(P)-binding Rossmann-like Domain"/>
    <property type="match status" value="1"/>
</dbReference>
<dbReference type="HAMAP" id="MF_00087">
    <property type="entry name" value="Glu_tRNA_reductase"/>
    <property type="match status" value="1"/>
</dbReference>
<dbReference type="InterPro" id="IPR000343">
    <property type="entry name" value="4pyrrol_synth_GluRdtase"/>
</dbReference>
<dbReference type="InterPro" id="IPR015896">
    <property type="entry name" value="4pyrrol_synth_GluRdtase_dimer"/>
</dbReference>
<dbReference type="InterPro" id="IPR015895">
    <property type="entry name" value="4pyrrol_synth_GluRdtase_N"/>
</dbReference>
<dbReference type="InterPro" id="IPR018214">
    <property type="entry name" value="GluRdtase_CS"/>
</dbReference>
<dbReference type="InterPro" id="IPR036453">
    <property type="entry name" value="GluRdtase_dimer_dom_sf"/>
</dbReference>
<dbReference type="InterPro" id="IPR036343">
    <property type="entry name" value="GluRdtase_N_sf"/>
</dbReference>
<dbReference type="InterPro" id="IPR036291">
    <property type="entry name" value="NAD(P)-bd_dom_sf"/>
</dbReference>
<dbReference type="InterPro" id="IPR018073">
    <property type="entry name" value="Prot_inh_cystat_CS"/>
</dbReference>
<dbReference type="InterPro" id="IPR006151">
    <property type="entry name" value="Shikm_DH/Glu-tRNA_Rdtase"/>
</dbReference>
<dbReference type="NCBIfam" id="TIGR01035">
    <property type="entry name" value="hemA"/>
    <property type="match status" value="1"/>
</dbReference>
<dbReference type="PANTHER" id="PTHR43013">
    <property type="entry name" value="GLUTAMYL-TRNA REDUCTASE"/>
    <property type="match status" value="1"/>
</dbReference>
<dbReference type="PANTHER" id="PTHR43013:SF1">
    <property type="entry name" value="GLUTAMYL-TRNA REDUCTASE"/>
    <property type="match status" value="1"/>
</dbReference>
<dbReference type="Pfam" id="PF00745">
    <property type="entry name" value="GlutR_dimer"/>
    <property type="match status" value="1"/>
</dbReference>
<dbReference type="Pfam" id="PF05201">
    <property type="entry name" value="GlutR_N"/>
    <property type="match status" value="1"/>
</dbReference>
<dbReference type="Pfam" id="PF01488">
    <property type="entry name" value="Shikimate_DH"/>
    <property type="match status" value="1"/>
</dbReference>
<dbReference type="PIRSF" id="PIRSF000445">
    <property type="entry name" value="4pyrrol_synth_GluRdtase"/>
    <property type="match status" value="1"/>
</dbReference>
<dbReference type="SUPFAM" id="SSF69742">
    <property type="entry name" value="Glutamyl tRNA-reductase catalytic, N-terminal domain"/>
    <property type="match status" value="1"/>
</dbReference>
<dbReference type="SUPFAM" id="SSF69075">
    <property type="entry name" value="Glutamyl tRNA-reductase dimerization domain"/>
    <property type="match status" value="1"/>
</dbReference>
<dbReference type="SUPFAM" id="SSF51735">
    <property type="entry name" value="NAD(P)-binding Rossmann-fold domains"/>
    <property type="match status" value="1"/>
</dbReference>
<dbReference type="PROSITE" id="PS00747">
    <property type="entry name" value="GLUTR"/>
    <property type="match status" value="1"/>
</dbReference>
<feature type="chain" id="PRO_0000335020" description="Glutamyl-tRNA reductase">
    <location>
        <begin position="1"/>
        <end position="428"/>
    </location>
</feature>
<feature type="active site" description="Nucleophile" evidence="1">
    <location>
        <position position="51"/>
    </location>
</feature>
<feature type="binding site" evidence="1">
    <location>
        <begin position="50"/>
        <end position="53"/>
    </location>
    <ligand>
        <name>substrate</name>
    </ligand>
</feature>
<feature type="binding site" evidence="1">
    <location>
        <position position="110"/>
    </location>
    <ligand>
        <name>substrate</name>
    </ligand>
</feature>
<feature type="binding site" evidence="1">
    <location>
        <begin position="115"/>
        <end position="117"/>
    </location>
    <ligand>
        <name>substrate</name>
    </ligand>
</feature>
<feature type="binding site" evidence="1">
    <location>
        <position position="121"/>
    </location>
    <ligand>
        <name>substrate</name>
    </ligand>
</feature>
<feature type="binding site" evidence="1">
    <location>
        <begin position="190"/>
        <end position="195"/>
    </location>
    <ligand>
        <name>NADP(+)</name>
        <dbReference type="ChEBI" id="CHEBI:58349"/>
    </ligand>
</feature>
<feature type="site" description="Important for activity" evidence="1">
    <location>
        <position position="100"/>
    </location>
</feature>
<evidence type="ECO:0000255" key="1">
    <source>
        <dbReference type="HAMAP-Rule" id="MF_00087"/>
    </source>
</evidence>
<keyword id="KW-0521">NADP</keyword>
<keyword id="KW-0560">Oxidoreductase</keyword>
<keyword id="KW-0627">Porphyrin biosynthesis</keyword>
<keyword id="KW-1185">Reference proteome</keyword>
<proteinExistence type="inferred from homology"/>